<comment type="function">
    <text evidence="1">Catalyzes the ATP-dependent amination of UTP to CTP with either L-glutamine or ammonia as the source of nitrogen. Regulates intracellular CTP levels through interactions with the four ribonucleotide triphosphates.</text>
</comment>
<comment type="catalytic activity">
    <reaction evidence="1">
        <text>UTP + L-glutamine + ATP + H2O = CTP + L-glutamate + ADP + phosphate + 2 H(+)</text>
        <dbReference type="Rhea" id="RHEA:26426"/>
        <dbReference type="ChEBI" id="CHEBI:15377"/>
        <dbReference type="ChEBI" id="CHEBI:15378"/>
        <dbReference type="ChEBI" id="CHEBI:29985"/>
        <dbReference type="ChEBI" id="CHEBI:30616"/>
        <dbReference type="ChEBI" id="CHEBI:37563"/>
        <dbReference type="ChEBI" id="CHEBI:43474"/>
        <dbReference type="ChEBI" id="CHEBI:46398"/>
        <dbReference type="ChEBI" id="CHEBI:58359"/>
        <dbReference type="ChEBI" id="CHEBI:456216"/>
        <dbReference type="EC" id="6.3.4.2"/>
    </reaction>
</comment>
<comment type="catalytic activity">
    <reaction evidence="1">
        <text>L-glutamine + H2O = L-glutamate + NH4(+)</text>
        <dbReference type="Rhea" id="RHEA:15889"/>
        <dbReference type="ChEBI" id="CHEBI:15377"/>
        <dbReference type="ChEBI" id="CHEBI:28938"/>
        <dbReference type="ChEBI" id="CHEBI:29985"/>
        <dbReference type="ChEBI" id="CHEBI:58359"/>
    </reaction>
</comment>
<comment type="catalytic activity">
    <reaction evidence="1">
        <text>UTP + NH4(+) + ATP = CTP + ADP + phosphate + 2 H(+)</text>
        <dbReference type="Rhea" id="RHEA:16597"/>
        <dbReference type="ChEBI" id="CHEBI:15378"/>
        <dbReference type="ChEBI" id="CHEBI:28938"/>
        <dbReference type="ChEBI" id="CHEBI:30616"/>
        <dbReference type="ChEBI" id="CHEBI:37563"/>
        <dbReference type="ChEBI" id="CHEBI:43474"/>
        <dbReference type="ChEBI" id="CHEBI:46398"/>
        <dbReference type="ChEBI" id="CHEBI:456216"/>
    </reaction>
</comment>
<comment type="activity regulation">
    <text evidence="1">Allosterically activated by GTP, when glutamine is the substrate; GTP has no effect on the reaction when ammonia is the substrate. The allosteric effector GTP functions by stabilizing the protein conformation that binds the tetrahedral intermediate(s) formed during glutamine hydrolysis. Inhibited by the product CTP, via allosteric rather than competitive inhibition.</text>
</comment>
<comment type="pathway">
    <text evidence="1">Pyrimidine metabolism; CTP biosynthesis via de novo pathway; CTP from UDP: step 2/2.</text>
</comment>
<comment type="subunit">
    <text evidence="1">Homotetramer.</text>
</comment>
<comment type="miscellaneous">
    <text evidence="1">CTPSs have evolved a hybrid strategy for distinguishing between UTP and CTP. The overlapping regions of the product feedback inhibitory and substrate sites recognize a common feature in both compounds, the triphosphate moiety. To differentiate isosteric substrate and product pyrimidine rings, an additional pocket far from the expected kinase/ligase catalytic site, specifically recognizes the cytosine and ribose portions of the product inhibitor.</text>
</comment>
<comment type="similarity">
    <text evidence="1">Belongs to the CTP synthase family.</text>
</comment>
<dbReference type="EC" id="6.3.4.2" evidence="1"/>
<dbReference type="EMBL" id="BA000036">
    <property type="protein sequence ID" value="BAB98810.1"/>
    <property type="molecule type" value="Genomic_DNA"/>
</dbReference>
<dbReference type="EMBL" id="BX927152">
    <property type="protein sequence ID" value="CAF21427.1"/>
    <property type="molecule type" value="Genomic_DNA"/>
</dbReference>
<dbReference type="RefSeq" id="NP_600635.1">
    <property type="nucleotide sequence ID" value="NC_003450.3"/>
</dbReference>
<dbReference type="RefSeq" id="WP_003856281.1">
    <property type="nucleotide sequence ID" value="NC_006958.1"/>
</dbReference>
<dbReference type="SMR" id="Q8NQL7"/>
<dbReference type="STRING" id="196627.cg1606"/>
<dbReference type="MEROPS" id="C26.964"/>
<dbReference type="KEGG" id="cgb:cg1606"/>
<dbReference type="KEGG" id="cgl:Cgl1417"/>
<dbReference type="PATRIC" id="fig|196627.13.peg.1385"/>
<dbReference type="eggNOG" id="COG0504">
    <property type="taxonomic scope" value="Bacteria"/>
</dbReference>
<dbReference type="HOGENOM" id="CLU_011675_5_0_11"/>
<dbReference type="OrthoDB" id="9801107at2"/>
<dbReference type="BioCyc" id="CORYNE:G18NG-10999-MONOMER"/>
<dbReference type="UniPathway" id="UPA00159">
    <property type="reaction ID" value="UER00277"/>
</dbReference>
<dbReference type="Proteomes" id="UP000000582">
    <property type="component" value="Chromosome"/>
</dbReference>
<dbReference type="Proteomes" id="UP000001009">
    <property type="component" value="Chromosome"/>
</dbReference>
<dbReference type="GO" id="GO:0005829">
    <property type="term" value="C:cytosol"/>
    <property type="evidence" value="ECO:0007669"/>
    <property type="project" value="TreeGrafter"/>
</dbReference>
<dbReference type="GO" id="GO:0005524">
    <property type="term" value="F:ATP binding"/>
    <property type="evidence" value="ECO:0007669"/>
    <property type="project" value="UniProtKB-KW"/>
</dbReference>
<dbReference type="GO" id="GO:0003883">
    <property type="term" value="F:CTP synthase activity"/>
    <property type="evidence" value="ECO:0007669"/>
    <property type="project" value="UniProtKB-UniRule"/>
</dbReference>
<dbReference type="GO" id="GO:0004359">
    <property type="term" value="F:glutaminase activity"/>
    <property type="evidence" value="ECO:0007669"/>
    <property type="project" value="RHEA"/>
</dbReference>
<dbReference type="GO" id="GO:0042802">
    <property type="term" value="F:identical protein binding"/>
    <property type="evidence" value="ECO:0007669"/>
    <property type="project" value="TreeGrafter"/>
</dbReference>
<dbReference type="GO" id="GO:0046872">
    <property type="term" value="F:metal ion binding"/>
    <property type="evidence" value="ECO:0007669"/>
    <property type="project" value="UniProtKB-KW"/>
</dbReference>
<dbReference type="GO" id="GO:0044210">
    <property type="term" value="P:'de novo' CTP biosynthetic process"/>
    <property type="evidence" value="ECO:0007669"/>
    <property type="project" value="UniProtKB-UniRule"/>
</dbReference>
<dbReference type="GO" id="GO:0019856">
    <property type="term" value="P:pyrimidine nucleobase biosynthetic process"/>
    <property type="evidence" value="ECO:0007669"/>
    <property type="project" value="TreeGrafter"/>
</dbReference>
<dbReference type="CDD" id="cd03113">
    <property type="entry name" value="CTPS_N"/>
    <property type="match status" value="1"/>
</dbReference>
<dbReference type="CDD" id="cd01746">
    <property type="entry name" value="GATase1_CTP_Synthase"/>
    <property type="match status" value="1"/>
</dbReference>
<dbReference type="FunFam" id="3.40.50.300:FF:000009">
    <property type="entry name" value="CTP synthase"/>
    <property type="match status" value="1"/>
</dbReference>
<dbReference type="FunFam" id="3.40.50.880:FF:000002">
    <property type="entry name" value="CTP synthase"/>
    <property type="match status" value="1"/>
</dbReference>
<dbReference type="Gene3D" id="3.40.50.880">
    <property type="match status" value="1"/>
</dbReference>
<dbReference type="Gene3D" id="3.40.50.300">
    <property type="entry name" value="P-loop containing nucleotide triphosphate hydrolases"/>
    <property type="match status" value="1"/>
</dbReference>
<dbReference type="HAMAP" id="MF_01227">
    <property type="entry name" value="PyrG"/>
    <property type="match status" value="1"/>
</dbReference>
<dbReference type="InterPro" id="IPR029062">
    <property type="entry name" value="Class_I_gatase-like"/>
</dbReference>
<dbReference type="InterPro" id="IPR004468">
    <property type="entry name" value="CTP_synthase"/>
</dbReference>
<dbReference type="InterPro" id="IPR017456">
    <property type="entry name" value="CTP_synthase_N"/>
</dbReference>
<dbReference type="InterPro" id="IPR017926">
    <property type="entry name" value="GATASE"/>
</dbReference>
<dbReference type="InterPro" id="IPR033828">
    <property type="entry name" value="GATase1_CTP_Synthase"/>
</dbReference>
<dbReference type="InterPro" id="IPR027417">
    <property type="entry name" value="P-loop_NTPase"/>
</dbReference>
<dbReference type="NCBIfam" id="NF003792">
    <property type="entry name" value="PRK05380.1"/>
    <property type="match status" value="1"/>
</dbReference>
<dbReference type="NCBIfam" id="TIGR00337">
    <property type="entry name" value="PyrG"/>
    <property type="match status" value="1"/>
</dbReference>
<dbReference type="PANTHER" id="PTHR11550">
    <property type="entry name" value="CTP SYNTHASE"/>
    <property type="match status" value="1"/>
</dbReference>
<dbReference type="PANTHER" id="PTHR11550:SF0">
    <property type="entry name" value="CTP SYNTHASE-RELATED"/>
    <property type="match status" value="1"/>
</dbReference>
<dbReference type="Pfam" id="PF06418">
    <property type="entry name" value="CTP_synth_N"/>
    <property type="match status" value="1"/>
</dbReference>
<dbReference type="Pfam" id="PF00117">
    <property type="entry name" value="GATase"/>
    <property type="match status" value="1"/>
</dbReference>
<dbReference type="SUPFAM" id="SSF52317">
    <property type="entry name" value="Class I glutamine amidotransferase-like"/>
    <property type="match status" value="1"/>
</dbReference>
<dbReference type="SUPFAM" id="SSF52540">
    <property type="entry name" value="P-loop containing nucleoside triphosphate hydrolases"/>
    <property type="match status" value="1"/>
</dbReference>
<dbReference type="PROSITE" id="PS51273">
    <property type="entry name" value="GATASE_TYPE_1"/>
    <property type="match status" value="1"/>
</dbReference>
<sequence length="554" mass="60574">MTSSRKVRPTKHIFVTGGVVSSLGKGLTAASLGQLLIARGLSVTMQKLDPYLNVDPGTMNPFEHGEVFVTEDGAETDLDLGHYERFLDRNLGLNANVTTGKVYSTVIAKERRGEYLGKTVQVIPHITDEIKARILSMGEPDAHGNAPDVVISEVGGTVGDIESQPFLEAARQVRHEIGRENCFFIHCSLVPYLATSGELKTKPTQHSVAELRGIGILPDALVLRCDREVPQGLKDKIAMMCDVDYEGVVSCPDSSSIYNIPDVLYREHLDTFIIRRLGLPFRDVDWSTWHDLLERVNNPRHELTVGIVGKYIDLPDAYLSVVEAVRAAGYANWTRTNIKWITSDDCETPSGAMKALSGLDAIVVPGGFGIRGIEGKIGAITFAREHKIPLLGLCLGLQCTVIEAARQAGLEQASSTEFDPAATQPVIATMEEQKAAVSGEADLGGTMRLGAYPATLEEGSLVAELYGTTEVSERHRHRYEVNNAYRAQIAEGSDLVFSGTSPDGHLVEFVEYPKEVHPYLVATQAHPEYKSRPTHAHPLFYGLVKTALELRVHP</sequence>
<protein>
    <recommendedName>
        <fullName evidence="1">CTP synthase</fullName>
        <ecNumber evidence="1">6.3.4.2</ecNumber>
    </recommendedName>
    <alternativeName>
        <fullName evidence="1">Cytidine 5'-triphosphate synthase</fullName>
    </alternativeName>
    <alternativeName>
        <fullName evidence="1">Cytidine triphosphate synthetase</fullName>
        <shortName evidence="1">CTP synthetase</shortName>
        <shortName evidence="1">CTPS</shortName>
    </alternativeName>
    <alternativeName>
        <fullName evidence="1">UTP--ammonia ligase</fullName>
    </alternativeName>
</protein>
<keyword id="KW-0067">ATP-binding</keyword>
<keyword id="KW-0315">Glutamine amidotransferase</keyword>
<keyword id="KW-0436">Ligase</keyword>
<keyword id="KW-0460">Magnesium</keyword>
<keyword id="KW-0479">Metal-binding</keyword>
<keyword id="KW-0547">Nucleotide-binding</keyword>
<keyword id="KW-0665">Pyrimidine biosynthesis</keyword>
<keyword id="KW-1185">Reference proteome</keyword>
<name>PYRG_CORGL</name>
<organism>
    <name type="scientific">Corynebacterium glutamicum (strain ATCC 13032 / DSM 20300 / JCM 1318 / BCRC 11384 / CCUG 27702 / LMG 3730 / NBRC 12168 / NCIMB 10025 / NRRL B-2784 / 534)</name>
    <dbReference type="NCBI Taxonomy" id="196627"/>
    <lineage>
        <taxon>Bacteria</taxon>
        <taxon>Bacillati</taxon>
        <taxon>Actinomycetota</taxon>
        <taxon>Actinomycetes</taxon>
        <taxon>Mycobacteriales</taxon>
        <taxon>Corynebacteriaceae</taxon>
        <taxon>Corynebacterium</taxon>
    </lineage>
</organism>
<gene>
    <name evidence="1" type="primary">pyrG</name>
    <name type="ordered locus">Cgl1417</name>
    <name type="ordered locus">cg1606</name>
</gene>
<proteinExistence type="inferred from homology"/>
<reference key="1">
    <citation type="journal article" date="2003" name="Appl. Microbiol. Biotechnol.">
        <title>The Corynebacterium glutamicum genome: features and impacts on biotechnological processes.</title>
        <authorList>
            <person name="Ikeda M."/>
            <person name="Nakagawa S."/>
        </authorList>
    </citation>
    <scope>NUCLEOTIDE SEQUENCE [LARGE SCALE GENOMIC DNA]</scope>
    <source>
        <strain>ATCC 13032 / DSM 20300 / JCM 1318 / BCRC 11384 / CCUG 27702 / LMG 3730 / NBRC 12168 / NCIMB 10025 / NRRL B-2784 / 534</strain>
    </source>
</reference>
<reference key="2">
    <citation type="journal article" date="2003" name="J. Biotechnol.">
        <title>The complete Corynebacterium glutamicum ATCC 13032 genome sequence and its impact on the production of L-aspartate-derived amino acids and vitamins.</title>
        <authorList>
            <person name="Kalinowski J."/>
            <person name="Bathe B."/>
            <person name="Bartels D."/>
            <person name="Bischoff N."/>
            <person name="Bott M."/>
            <person name="Burkovski A."/>
            <person name="Dusch N."/>
            <person name="Eggeling L."/>
            <person name="Eikmanns B.J."/>
            <person name="Gaigalat L."/>
            <person name="Goesmann A."/>
            <person name="Hartmann M."/>
            <person name="Huthmacher K."/>
            <person name="Kraemer R."/>
            <person name="Linke B."/>
            <person name="McHardy A.C."/>
            <person name="Meyer F."/>
            <person name="Moeckel B."/>
            <person name="Pfefferle W."/>
            <person name="Puehler A."/>
            <person name="Rey D.A."/>
            <person name="Rueckert C."/>
            <person name="Rupp O."/>
            <person name="Sahm H."/>
            <person name="Wendisch V.F."/>
            <person name="Wiegraebe I."/>
            <person name="Tauch A."/>
        </authorList>
    </citation>
    <scope>NUCLEOTIDE SEQUENCE [LARGE SCALE GENOMIC DNA]</scope>
    <source>
        <strain>ATCC 13032 / DSM 20300 / JCM 1318 / BCRC 11384 / CCUG 27702 / LMG 3730 / NBRC 12168 / NCIMB 10025 / NRRL B-2784 / 534</strain>
    </source>
</reference>
<accession>Q8NQL7</accession>
<evidence type="ECO:0000255" key="1">
    <source>
        <dbReference type="HAMAP-Rule" id="MF_01227"/>
    </source>
</evidence>
<feature type="chain" id="PRO_0000138181" description="CTP synthase">
    <location>
        <begin position="1"/>
        <end position="554"/>
    </location>
</feature>
<feature type="domain" description="Glutamine amidotransferase type-1" evidence="1">
    <location>
        <begin position="304"/>
        <end position="553"/>
    </location>
</feature>
<feature type="region of interest" description="Amidoligase domain" evidence="1">
    <location>
        <begin position="1"/>
        <end position="279"/>
    </location>
</feature>
<feature type="active site" description="Nucleophile; for glutamine hydrolysis" evidence="1">
    <location>
        <position position="394"/>
    </location>
</feature>
<feature type="active site" evidence="1">
    <location>
        <position position="526"/>
    </location>
</feature>
<feature type="active site" evidence="1">
    <location>
        <position position="528"/>
    </location>
</feature>
<feature type="binding site" evidence="1">
    <location>
        <position position="21"/>
    </location>
    <ligand>
        <name>CTP</name>
        <dbReference type="ChEBI" id="CHEBI:37563"/>
        <note>allosteric inhibitor</note>
    </ligand>
</feature>
<feature type="binding site" evidence="1">
    <location>
        <position position="21"/>
    </location>
    <ligand>
        <name>UTP</name>
        <dbReference type="ChEBI" id="CHEBI:46398"/>
    </ligand>
</feature>
<feature type="binding site" evidence="1">
    <location>
        <begin position="22"/>
        <end position="27"/>
    </location>
    <ligand>
        <name>ATP</name>
        <dbReference type="ChEBI" id="CHEBI:30616"/>
    </ligand>
</feature>
<feature type="binding site" evidence="1">
    <location>
        <position position="79"/>
    </location>
    <ligand>
        <name>ATP</name>
        <dbReference type="ChEBI" id="CHEBI:30616"/>
    </ligand>
</feature>
<feature type="binding site" evidence="1">
    <location>
        <position position="79"/>
    </location>
    <ligand>
        <name>Mg(2+)</name>
        <dbReference type="ChEBI" id="CHEBI:18420"/>
    </ligand>
</feature>
<feature type="binding site" evidence="1">
    <location>
        <position position="153"/>
    </location>
    <ligand>
        <name>Mg(2+)</name>
        <dbReference type="ChEBI" id="CHEBI:18420"/>
    </ligand>
</feature>
<feature type="binding site" evidence="1">
    <location>
        <begin position="160"/>
        <end position="162"/>
    </location>
    <ligand>
        <name>CTP</name>
        <dbReference type="ChEBI" id="CHEBI:37563"/>
        <note>allosteric inhibitor</note>
    </ligand>
</feature>
<feature type="binding site" evidence="1">
    <location>
        <begin position="200"/>
        <end position="205"/>
    </location>
    <ligand>
        <name>CTP</name>
        <dbReference type="ChEBI" id="CHEBI:37563"/>
        <note>allosteric inhibitor</note>
    </ligand>
</feature>
<feature type="binding site" evidence="1">
    <location>
        <begin position="200"/>
        <end position="205"/>
    </location>
    <ligand>
        <name>UTP</name>
        <dbReference type="ChEBI" id="CHEBI:46398"/>
    </ligand>
</feature>
<feature type="binding site" evidence="1">
    <location>
        <position position="236"/>
    </location>
    <ligand>
        <name>CTP</name>
        <dbReference type="ChEBI" id="CHEBI:37563"/>
        <note>allosteric inhibitor</note>
    </ligand>
</feature>
<feature type="binding site" evidence="1">
    <location>
        <position position="236"/>
    </location>
    <ligand>
        <name>UTP</name>
        <dbReference type="ChEBI" id="CHEBI:46398"/>
    </ligand>
</feature>
<feature type="binding site" evidence="1">
    <location>
        <position position="367"/>
    </location>
    <ligand>
        <name>L-glutamine</name>
        <dbReference type="ChEBI" id="CHEBI:58359"/>
    </ligand>
</feature>
<feature type="binding site" evidence="1">
    <location>
        <begin position="395"/>
        <end position="398"/>
    </location>
    <ligand>
        <name>L-glutamine</name>
        <dbReference type="ChEBI" id="CHEBI:58359"/>
    </ligand>
</feature>
<feature type="binding site" evidence="1">
    <location>
        <position position="417"/>
    </location>
    <ligand>
        <name>L-glutamine</name>
        <dbReference type="ChEBI" id="CHEBI:58359"/>
    </ligand>
</feature>
<feature type="binding site" evidence="1">
    <location>
        <position position="478"/>
    </location>
    <ligand>
        <name>L-glutamine</name>
        <dbReference type="ChEBI" id="CHEBI:58359"/>
    </ligand>
</feature>